<name>EFTS_CAMFF</name>
<accession>A0RQU7</accession>
<protein>
    <recommendedName>
        <fullName evidence="1">Elongation factor Ts</fullName>
        <shortName evidence="1">EF-Ts</shortName>
    </recommendedName>
</protein>
<gene>
    <name evidence="1" type="primary">tsf</name>
    <name type="ordered locus">CFF8240_1441</name>
</gene>
<keyword id="KW-0963">Cytoplasm</keyword>
<keyword id="KW-0251">Elongation factor</keyword>
<keyword id="KW-0648">Protein biosynthesis</keyword>
<feature type="chain" id="PRO_0000323447" description="Elongation factor Ts">
    <location>
        <begin position="1"/>
        <end position="354"/>
    </location>
</feature>
<feature type="region of interest" description="Involved in Mg(2+) ion dislocation from EF-Tu" evidence="1">
    <location>
        <begin position="81"/>
        <end position="84"/>
    </location>
</feature>
<sequence>MEISASMVKELRESTGAGMMDCKKALQESNGDMQKAVDILREKGLGKAAKKADRLASEGLVSVVVSENNKTATITEINSETDFVAKNATFVDLVKNTTIHVQTNSINTVEELKESSINGVKFEEYFQSQIATIGENLVVRRFETIKAAKGGIVAGYIHSNSRVGVLIGAACDSEETAAKIHDFLRNLCMHAAAMKPQVISYKEFDADFVEKEYLALKGELEKENEELVRLKKPLHKIPEFASRAQLTDDIIAKATENLKAELKKQGKPEAIWDKILPGQIDRYIADNTQLDQRLTLLGQFYVMDDKKTVEQAIADEAKKVGGKVEIVSYVRFEVGEGLEKKSEDFAAEVAAQMA</sequence>
<reference key="1">
    <citation type="submission" date="2006-11" db="EMBL/GenBank/DDBJ databases">
        <title>Sequence of Campylobacter fetus subsp. fetus 82-40.</title>
        <authorList>
            <person name="Fouts D.E."/>
            <person name="Nelson K.E."/>
        </authorList>
    </citation>
    <scope>NUCLEOTIDE SEQUENCE [LARGE SCALE GENOMIC DNA]</scope>
    <source>
        <strain>82-40</strain>
    </source>
</reference>
<organism>
    <name type="scientific">Campylobacter fetus subsp. fetus (strain 82-40)</name>
    <dbReference type="NCBI Taxonomy" id="360106"/>
    <lineage>
        <taxon>Bacteria</taxon>
        <taxon>Pseudomonadati</taxon>
        <taxon>Campylobacterota</taxon>
        <taxon>Epsilonproteobacteria</taxon>
        <taxon>Campylobacterales</taxon>
        <taxon>Campylobacteraceae</taxon>
        <taxon>Campylobacter</taxon>
    </lineage>
</organism>
<dbReference type="EMBL" id="CP000487">
    <property type="protein sequence ID" value="ABK82567.1"/>
    <property type="molecule type" value="Genomic_DNA"/>
</dbReference>
<dbReference type="RefSeq" id="WP_011732208.1">
    <property type="nucleotide sequence ID" value="NC_008599.1"/>
</dbReference>
<dbReference type="SMR" id="A0RQU7"/>
<dbReference type="GeneID" id="61065260"/>
<dbReference type="KEGG" id="cff:CFF8240_1441"/>
<dbReference type="eggNOG" id="COG0264">
    <property type="taxonomic scope" value="Bacteria"/>
</dbReference>
<dbReference type="HOGENOM" id="CLU_047155_0_1_7"/>
<dbReference type="Proteomes" id="UP000000760">
    <property type="component" value="Chromosome"/>
</dbReference>
<dbReference type="GO" id="GO:0005737">
    <property type="term" value="C:cytoplasm"/>
    <property type="evidence" value="ECO:0007669"/>
    <property type="project" value="UniProtKB-SubCell"/>
</dbReference>
<dbReference type="GO" id="GO:0003746">
    <property type="term" value="F:translation elongation factor activity"/>
    <property type="evidence" value="ECO:0007669"/>
    <property type="project" value="UniProtKB-UniRule"/>
</dbReference>
<dbReference type="CDD" id="cd14275">
    <property type="entry name" value="UBA_EF-Ts"/>
    <property type="match status" value="1"/>
</dbReference>
<dbReference type="FunFam" id="1.10.286.20:FF:000004">
    <property type="entry name" value="Elongation factor Ts"/>
    <property type="match status" value="1"/>
</dbReference>
<dbReference type="FunFam" id="1.10.8.10:FF:000001">
    <property type="entry name" value="Elongation factor Ts"/>
    <property type="match status" value="1"/>
</dbReference>
<dbReference type="Gene3D" id="1.10.286.20">
    <property type="match status" value="1"/>
</dbReference>
<dbReference type="Gene3D" id="1.10.8.10">
    <property type="entry name" value="DNA helicase RuvA subunit, C-terminal domain"/>
    <property type="match status" value="1"/>
</dbReference>
<dbReference type="Gene3D" id="3.30.479.20">
    <property type="entry name" value="Elongation factor Ts, dimerisation domain"/>
    <property type="match status" value="2"/>
</dbReference>
<dbReference type="HAMAP" id="MF_00050">
    <property type="entry name" value="EF_Ts"/>
    <property type="match status" value="1"/>
</dbReference>
<dbReference type="InterPro" id="IPR036402">
    <property type="entry name" value="EF-Ts_dimer_sf"/>
</dbReference>
<dbReference type="InterPro" id="IPR001816">
    <property type="entry name" value="Transl_elong_EFTs/EF1B"/>
</dbReference>
<dbReference type="InterPro" id="IPR014039">
    <property type="entry name" value="Transl_elong_EFTs/EF1B_dimer"/>
</dbReference>
<dbReference type="InterPro" id="IPR018101">
    <property type="entry name" value="Transl_elong_Ts_CS"/>
</dbReference>
<dbReference type="InterPro" id="IPR009060">
    <property type="entry name" value="UBA-like_sf"/>
</dbReference>
<dbReference type="NCBIfam" id="TIGR00116">
    <property type="entry name" value="tsf"/>
    <property type="match status" value="1"/>
</dbReference>
<dbReference type="PANTHER" id="PTHR11741">
    <property type="entry name" value="ELONGATION FACTOR TS"/>
    <property type="match status" value="1"/>
</dbReference>
<dbReference type="PANTHER" id="PTHR11741:SF0">
    <property type="entry name" value="ELONGATION FACTOR TS, MITOCHONDRIAL"/>
    <property type="match status" value="1"/>
</dbReference>
<dbReference type="Pfam" id="PF00889">
    <property type="entry name" value="EF_TS"/>
    <property type="match status" value="2"/>
</dbReference>
<dbReference type="SUPFAM" id="SSF54713">
    <property type="entry name" value="Elongation factor Ts (EF-Ts), dimerisation domain"/>
    <property type="match status" value="3"/>
</dbReference>
<dbReference type="SUPFAM" id="SSF46934">
    <property type="entry name" value="UBA-like"/>
    <property type="match status" value="1"/>
</dbReference>
<dbReference type="PROSITE" id="PS01126">
    <property type="entry name" value="EF_TS_1"/>
    <property type="match status" value="1"/>
</dbReference>
<dbReference type="PROSITE" id="PS01127">
    <property type="entry name" value="EF_TS_2"/>
    <property type="match status" value="1"/>
</dbReference>
<comment type="function">
    <text evidence="1">Associates with the EF-Tu.GDP complex and induces the exchange of GDP to GTP. It remains bound to the aminoacyl-tRNA.EF-Tu.GTP complex up to the GTP hydrolysis stage on the ribosome.</text>
</comment>
<comment type="subcellular location">
    <subcellularLocation>
        <location evidence="1">Cytoplasm</location>
    </subcellularLocation>
</comment>
<comment type="similarity">
    <text evidence="1">Belongs to the EF-Ts family.</text>
</comment>
<proteinExistence type="inferred from homology"/>
<evidence type="ECO:0000255" key="1">
    <source>
        <dbReference type="HAMAP-Rule" id="MF_00050"/>
    </source>
</evidence>